<organismHost>
    <name type="scientific">Homo sapiens</name>
    <name type="common">Human</name>
    <dbReference type="NCBI Taxonomy" id="9606"/>
</organismHost>
<protein>
    <recommendedName>
        <fullName>Protein C</fullName>
    </recommendedName>
</protein>
<organism>
    <name type="scientific">Measles virus (strain Edmonston)</name>
    <name type="common">MeV</name>
    <name type="synonym">Subacute sclerose panencephalitis virus</name>
    <dbReference type="NCBI Taxonomy" id="11235"/>
    <lineage>
        <taxon>Viruses</taxon>
        <taxon>Riboviria</taxon>
        <taxon>Orthornavirae</taxon>
        <taxon>Negarnaviricota</taxon>
        <taxon>Haploviricotina</taxon>
        <taxon>Monjiviricetes</taxon>
        <taxon>Mononegavirales</taxon>
        <taxon>Paramyxoviridae</taxon>
        <taxon>Orthoparamyxovirinae</taxon>
        <taxon>Morbillivirus</taxon>
        <taxon>Morbillivirus hominis</taxon>
        <taxon>Measles morbillivirus</taxon>
    </lineage>
</organism>
<evidence type="ECO:0000250" key="1">
    <source>
        <dbReference type="UniProtKB" id="Q9YZN9"/>
    </source>
</evidence>
<evidence type="ECO:0000256" key="2">
    <source>
        <dbReference type="SAM" id="MobiDB-lite"/>
    </source>
</evidence>
<evidence type="ECO:0000305" key="3"/>
<gene>
    <name type="primary">P/V/C</name>
</gene>
<feature type="chain" id="PRO_0000142794" description="Protein C">
    <location>
        <begin position="1"/>
        <end position="186"/>
    </location>
</feature>
<feature type="region of interest" description="Disordered" evidence="2">
    <location>
        <begin position="1"/>
        <end position="44"/>
    </location>
</feature>
<feature type="compositionally biased region" description="Polar residues" evidence="2">
    <location>
        <begin position="1"/>
        <end position="15"/>
    </location>
</feature>
<comment type="function">
    <text evidence="1">Ribonucleocapsid-associated protein that interacts with the phosphoprotein (P), thereby increasing replication accuracy and processivity of the polymerase complex.</text>
</comment>
<comment type="subunit">
    <text evidence="1">Interacts with the phosphoprotein (via C-terminus); this interaction allows C to associate with the ribonucleocapsid.</text>
</comment>
<comment type="subcellular location">
    <subcellularLocation>
        <location evidence="1">Host nucleus</location>
    </subcellularLocation>
    <subcellularLocation>
        <location evidence="1">Host cytoplasmic vesicle</location>
    </subcellularLocation>
    <text evidence="1">Relocalizes from the nucleus to the inclusion bodies in the presence of P.</text>
</comment>
<comment type="similarity">
    <text evidence="3">Belongs to the morbillivirus protein C family.</text>
</comment>
<proteinExistence type="inferred from homology"/>
<name>C_MEASE</name>
<reference key="1">
    <citation type="journal article" date="1985" name="J. Virol.">
        <title>Measles virus P gene codes for two proteins.</title>
        <authorList>
            <person name="Bellini W.J."/>
            <person name="Englund G."/>
            <person name="Rozenblatt S."/>
            <person name="Arnheiter H."/>
            <person name="Richardson C.D."/>
        </authorList>
    </citation>
    <scope>NUCLEOTIDE SEQUENCE [GENOMIC RNA]</scope>
</reference>
<keyword id="KW-1036">Host cytoplasmic vesicle</keyword>
<keyword id="KW-1048">Host nucleus</keyword>
<dbReference type="EMBL" id="M10456">
    <property type="protein sequence ID" value="AAA46438.1"/>
    <property type="molecule type" value="Genomic_RNA"/>
</dbReference>
<dbReference type="PIR" id="A04040">
    <property type="entry name" value="MNNZC"/>
</dbReference>
<dbReference type="GO" id="GO:0044161">
    <property type="term" value="C:host cell cytoplasmic vesicle"/>
    <property type="evidence" value="ECO:0007669"/>
    <property type="project" value="UniProtKB-SubCell"/>
</dbReference>
<dbReference type="GO" id="GO:0042025">
    <property type="term" value="C:host cell nucleus"/>
    <property type="evidence" value="ECO:0007669"/>
    <property type="project" value="UniProtKB-SubCell"/>
</dbReference>
<dbReference type="InterPro" id="IPR003875">
    <property type="entry name" value="Paramyxovir_NSC"/>
</dbReference>
<dbReference type="Pfam" id="PF02725">
    <property type="entry name" value="Paramyxo_NS_C"/>
    <property type="match status" value="1"/>
</dbReference>
<accession>P03424</accession>
<sequence length="186" mass="21037">MSKTDWNASGLSRPSPSAHWPSRKLWQHGQKYQTTQDRSEPPAGKRRQAVRVSANHASQQLDQLKAVHLASAVRDLERAMTTLKLWESPQEISRHQALGYSVIMFMITAVKRLRESKMLTLSWFNQALMVIAPSQEETMNLKTAMWILANLIPRDMLSLTGDLLPSLWGSGLLMLKLQKEGRSTSS</sequence>